<dbReference type="EMBL" id="AP009240">
    <property type="protein sequence ID" value="BAG77408.1"/>
    <property type="molecule type" value="Genomic_DNA"/>
</dbReference>
<dbReference type="RefSeq" id="WP_000124850.1">
    <property type="nucleotide sequence ID" value="NC_011415.1"/>
</dbReference>
<dbReference type="SMR" id="B6IBD4"/>
<dbReference type="GeneID" id="98388757"/>
<dbReference type="KEGG" id="ecy:ECSE_1884"/>
<dbReference type="HOGENOM" id="CLU_123265_0_1_6"/>
<dbReference type="Proteomes" id="UP000008199">
    <property type="component" value="Chromosome"/>
</dbReference>
<dbReference type="GO" id="GO:1990904">
    <property type="term" value="C:ribonucleoprotein complex"/>
    <property type="evidence" value="ECO:0007669"/>
    <property type="project" value="UniProtKB-KW"/>
</dbReference>
<dbReference type="GO" id="GO:0005840">
    <property type="term" value="C:ribosome"/>
    <property type="evidence" value="ECO:0007669"/>
    <property type="project" value="UniProtKB-KW"/>
</dbReference>
<dbReference type="GO" id="GO:0019843">
    <property type="term" value="F:rRNA binding"/>
    <property type="evidence" value="ECO:0007669"/>
    <property type="project" value="UniProtKB-UniRule"/>
</dbReference>
<dbReference type="GO" id="GO:0003735">
    <property type="term" value="F:structural constituent of ribosome"/>
    <property type="evidence" value="ECO:0007669"/>
    <property type="project" value="InterPro"/>
</dbReference>
<dbReference type="GO" id="GO:0000027">
    <property type="term" value="P:ribosomal large subunit assembly"/>
    <property type="evidence" value="ECO:0007669"/>
    <property type="project" value="UniProtKB-UniRule"/>
</dbReference>
<dbReference type="GO" id="GO:0006412">
    <property type="term" value="P:translation"/>
    <property type="evidence" value="ECO:0007669"/>
    <property type="project" value="InterPro"/>
</dbReference>
<dbReference type="CDD" id="cd07026">
    <property type="entry name" value="Ribosomal_L20"/>
    <property type="match status" value="1"/>
</dbReference>
<dbReference type="FunFam" id="1.10.1900.20:FF:000001">
    <property type="entry name" value="50S ribosomal protein L20"/>
    <property type="match status" value="1"/>
</dbReference>
<dbReference type="Gene3D" id="6.10.160.10">
    <property type="match status" value="1"/>
</dbReference>
<dbReference type="Gene3D" id="1.10.1900.20">
    <property type="entry name" value="Ribosomal protein L20"/>
    <property type="match status" value="1"/>
</dbReference>
<dbReference type="HAMAP" id="MF_00382">
    <property type="entry name" value="Ribosomal_bL20"/>
    <property type="match status" value="1"/>
</dbReference>
<dbReference type="InterPro" id="IPR005813">
    <property type="entry name" value="Ribosomal_bL20"/>
</dbReference>
<dbReference type="InterPro" id="IPR049946">
    <property type="entry name" value="RIBOSOMAL_L20_CS"/>
</dbReference>
<dbReference type="InterPro" id="IPR035566">
    <property type="entry name" value="Ribosomal_protein_bL20_C"/>
</dbReference>
<dbReference type="NCBIfam" id="TIGR01032">
    <property type="entry name" value="rplT_bact"/>
    <property type="match status" value="1"/>
</dbReference>
<dbReference type="PANTHER" id="PTHR10986">
    <property type="entry name" value="39S RIBOSOMAL PROTEIN L20"/>
    <property type="match status" value="1"/>
</dbReference>
<dbReference type="Pfam" id="PF00453">
    <property type="entry name" value="Ribosomal_L20"/>
    <property type="match status" value="1"/>
</dbReference>
<dbReference type="PRINTS" id="PR00062">
    <property type="entry name" value="RIBOSOMALL20"/>
</dbReference>
<dbReference type="SUPFAM" id="SSF74731">
    <property type="entry name" value="Ribosomal protein L20"/>
    <property type="match status" value="1"/>
</dbReference>
<dbReference type="PROSITE" id="PS00937">
    <property type="entry name" value="RIBOSOMAL_L20"/>
    <property type="match status" value="1"/>
</dbReference>
<protein>
    <recommendedName>
        <fullName evidence="1">Large ribosomal subunit protein bL20</fullName>
    </recommendedName>
    <alternativeName>
        <fullName evidence="2">50S ribosomal protein L20</fullName>
    </alternativeName>
</protein>
<gene>
    <name evidence="1" type="primary">rplT</name>
    <name type="ordered locus">ECSE_1884</name>
</gene>
<reference key="1">
    <citation type="journal article" date="2008" name="DNA Res.">
        <title>Complete genome sequence and comparative analysis of the wild-type commensal Escherichia coli strain SE11 isolated from a healthy adult.</title>
        <authorList>
            <person name="Oshima K."/>
            <person name="Toh H."/>
            <person name="Ogura Y."/>
            <person name="Sasamoto H."/>
            <person name="Morita H."/>
            <person name="Park S.-H."/>
            <person name="Ooka T."/>
            <person name="Iyoda S."/>
            <person name="Taylor T.D."/>
            <person name="Hayashi T."/>
            <person name="Itoh K."/>
            <person name="Hattori M."/>
        </authorList>
    </citation>
    <scope>NUCLEOTIDE SEQUENCE [LARGE SCALE GENOMIC DNA]</scope>
    <source>
        <strain>SE11</strain>
    </source>
</reference>
<sequence length="118" mass="13497">MARVKRGVIARARHKKILKQAKGYYGARSRVYRVAFQAVIKAGQYAYRDRRQRKRQFRQLWIARINAAARQNGISYSKFINGLKKASVEIDRKILADIAVFDKVAFTALVEKAKAALA</sequence>
<keyword id="KW-0687">Ribonucleoprotein</keyword>
<keyword id="KW-0689">Ribosomal protein</keyword>
<keyword id="KW-0694">RNA-binding</keyword>
<keyword id="KW-0699">rRNA-binding</keyword>
<comment type="function">
    <text evidence="1">Binds directly to 23S ribosomal RNA and is necessary for the in vitro assembly process of the 50S ribosomal subunit. It is not involved in the protein synthesizing functions of that subunit.</text>
</comment>
<comment type="similarity">
    <text evidence="1">Belongs to the bacterial ribosomal protein bL20 family.</text>
</comment>
<proteinExistence type="inferred from homology"/>
<evidence type="ECO:0000255" key="1">
    <source>
        <dbReference type="HAMAP-Rule" id="MF_00382"/>
    </source>
</evidence>
<evidence type="ECO:0000305" key="2"/>
<organism>
    <name type="scientific">Escherichia coli (strain SE11)</name>
    <dbReference type="NCBI Taxonomy" id="409438"/>
    <lineage>
        <taxon>Bacteria</taxon>
        <taxon>Pseudomonadati</taxon>
        <taxon>Pseudomonadota</taxon>
        <taxon>Gammaproteobacteria</taxon>
        <taxon>Enterobacterales</taxon>
        <taxon>Enterobacteriaceae</taxon>
        <taxon>Escherichia</taxon>
    </lineage>
</organism>
<accession>B6IBD4</accession>
<name>RL20_ECOSE</name>
<feature type="chain" id="PRO_1000122314" description="Large ribosomal subunit protein bL20">
    <location>
        <begin position="1"/>
        <end position="118"/>
    </location>
</feature>